<accession>O05083</accession>
<comment type="subcellular location">
    <subcellularLocation>
        <location evidence="2">Membrane</location>
        <topology evidence="2">Single-pass membrane protein</topology>
    </subcellularLocation>
</comment>
<comment type="similarity">
    <text evidence="2">Belongs to the glycosyltransferase group 1 family. Glycosyltransferase 4 subfamily.</text>
</comment>
<keyword id="KW-0328">Glycosyltransferase</keyword>
<keyword id="KW-0472">Membrane</keyword>
<keyword id="KW-1185">Reference proteome</keyword>
<keyword id="KW-0808">Transferase</keyword>
<keyword id="KW-0812">Transmembrane</keyword>
<keyword id="KW-1133">Transmembrane helix</keyword>
<organism>
    <name type="scientific">Haemophilus influenzae (strain ATCC 51907 / DSM 11121 / KW20 / Rd)</name>
    <dbReference type="NCBI Taxonomy" id="71421"/>
    <lineage>
        <taxon>Bacteria</taxon>
        <taxon>Pseudomonadati</taxon>
        <taxon>Pseudomonadota</taxon>
        <taxon>Gammaproteobacteria</taxon>
        <taxon>Pasteurellales</taxon>
        <taxon>Pasteurellaceae</taxon>
        <taxon>Haemophilus</taxon>
    </lineage>
</organism>
<protein>
    <recommendedName>
        <fullName>Uncharacterized glycosyltransferase HI_1698</fullName>
        <ecNumber>2.4.-.-</ecNumber>
    </recommendedName>
</protein>
<name>Y1698_HAEIN</name>
<feature type="chain" id="PRO_0000080317" description="Uncharacterized glycosyltransferase HI_1698">
    <location>
        <begin position="1"/>
        <end position="353"/>
    </location>
</feature>
<feature type="transmembrane region" description="Helical" evidence="1">
    <location>
        <begin position="267"/>
        <end position="287"/>
    </location>
</feature>
<proteinExistence type="inferred from homology"/>
<dbReference type="EC" id="2.4.-.-"/>
<dbReference type="EMBL" id="L42023">
    <property type="protein sequence ID" value="AAC23344.1"/>
    <property type="molecule type" value="Genomic_DNA"/>
</dbReference>
<dbReference type="PIR" id="F64175">
    <property type="entry name" value="F64175"/>
</dbReference>
<dbReference type="RefSeq" id="NP_439840.1">
    <property type="nucleotide sequence ID" value="NC_000907.1"/>
</dbReference>
<dbReference type="SMR" id="O05083"/>
<dbReference type="STRING" id="71421.HI_1698"/>
<dbReference type="CAZy" id="GT4">
    <property type="family name" value="Glycosyltransferase Family 4"/>
</dbReference>
<dbReference type="EnsemblBacteria" id="AAC23344">
    <property type="protein sequence ID" value="AAC23344"/>
    <property type="gene ID" value="HI_1698"/>
</dbReference>
<dbReference type="KEGG" id="hin:HI_1698"/>
<dbReference type="PATRIC" id="fig|71421.8.peg.1777"/>
<dbReference type="eggNOG" id="COG0438">
    <property type="taxonomic scope" value="Bacteria"/>
</dbReference>
<dbReference type="HOGENOM" id="CLU_009583_0_0_6"/>
<dbReference type="OrthoDB" id="9777346at2"/>
<dbReference type="PhylomeDB" id="O05083"/>
<dbReference type="BioCyc" id="HINF71421:G1GJ1-1714-MONOMER"/>
<dbReference type="Proteomes" id="UP000000579">
    <property type="component" value="Chromosome"/>
</dbReference>
<dbReference type="GO" id="GO:0016020">
    <property type="term" value="C:membrane"/>
    <property type="evidence" value="ECO:0007669"/>
    <property type="project" value="UniProtKB-SubCell"/>
</dbReference>
<dbReference type="GO" id="GO:0016757">
    <property type="term" value="F:glycosyltransferase activity"/>
    <property type="evidence" value="ECO:0007669"/>
    <property type="project" value="UniProtKB-KW"/>
</dbReference>
<dbReference type="GO" id="GO:1901135">
    <property type="term" value="P:carbohydrate derivative metabolic process"/>
    <property type="evidence" value="ECO:0007669"/>
    <property type="project" value="UniProtKB-ARBA"/>
</dbReference>
<dbReference type="CDD" id="cd03820">
    <property type="entry name" value="GT4_AmsD-like"/>
    <property type="match status" value="1"/>
</dbReference>
<dbReference type="Gene3D" id="3.40.50.2000">
    <property type="entry name" value="Glycogen Phosphorylase B"/>
    <property type="match status" value="2"/>
</dbReference>
<dbReference type="InterPro" id="IPR001296">
    <property type="entry name" value="Glyco_trans_1"/>
</dbReference>
<dbReference type="InterPro" id="IPR028098">
    <property type="entry name" value="Glyco_trans_4-like_N"/>
</dbReference>
<dbReference type="PANTHER" id="PTHR12526">
    <property type="entry name" value="GLYCOSYLTRANSFERASE"/>
    <property type="match status" value="1"/>
</dbReference>
<dbReference type="PANTHER" id="PTHR12526:SF629">
    <property type="entry name" value="TEICHURONIC ACID BIOSYNTHESIS GLYCOSYLTRANSFERASE TUAH-RELATED"/>
    <property type="match status" value="1"/>
</dbReference>
<dbReference type="Pfam" id="PF13439">
    <property type="entry name" value="Glyco_transf_4"/>
    <property type="match status" value="1"/>
</dbReference>
<dbReference type="Pfam" id="PF00534">
    <property type="entry name" value="Glycos_transf_1"/>
    <property type="match status" value="1"/>
</dbReference>
<dbReference type="SUPFAM" id="SSF53756">
    <property type="entry name" value="UDP-Glycosyltransferase/glycogen phosphorylase"/>
    <property type="match status" value="1"/>
</dbReference>
<sequence>MKKIGFFIMNIGSAGGTERVSINVANALAKQGYDVSFISIGGNKPFFQVDEKINIYAMNKLPYSLKKDYFSITKKLRELVKELQLDTLIVVDGAIMLFSALALVNLNIKHILWEHYSFNFTGNRLVRTLGKYLAVTTCDKIVTLTEAEKTLWQEKFKTNNIISIANPNTLLPKNKLAKLENKTILSVGHLFSYKGFDYLLKVWQVLAKKYPDWNLKIVGSGEEEENLKNLAKALDIEDSVNFIPRTNDVSFYYESSSIYCLPSQTEGLPLVVIEAMAFGLPIVAFNCSPGVKQLVEHKENGFLCEQNNIEEMVKGLDLLINNPELYLQMSDKSRLMSEDYGIEKIIEEWKGIL</sequence>
<gene>
    <name type="ordered locus">HI_1698</name>
</gene>
<reference key="1">
    <citation type="journal article" date="1995" name="Science">
        <title>Whole-genome random sequencing and assembly of Haemophilus influenzae Rd.</title>
        <authorList>
            <person name="Fleischmann R.D."/>
            <person name="Adams M.D."/>
            <person name="White O."/>
            <person name="Clayton R.A."/>
            <person name="Kirkness E.F."/>
            <person name="Kerlavage A.R."/>
            <person name="Bult C.J."/>
            <person name="Tomb J.-F."/>
            <person name="Dougherty B.A."/>
            <person name="Merrick J.M."/>
            <person name="McKenney K."/>
            <person name="Sutton G.G."/>
            <person name="FitzHugh W."/>
            <person name="Fields C.A."/>
            <person name="Gocayne J.D."/>
            <person name="Scott J.D."/>
            <person name="Shirley R."/>
            <person name="Liu L.-I."/>
            <person name="Glodek A."/>
            <person name="Kelley J.M."/>
            <person name="Weidman J.F."/>
            <person name="Phillips C.A."/>
            <person name="Spriggs T."/>
            <person name="Hedblom E."/>
            <person name="Cotton M.D."/>
            <person name="Utterback T.R."/>
            <person name="Hanna M.C."/>
            <person name="Nguyen D.T."/>
            <person name="Saudek D.M."/>
            <person name="Brandon R.C."/>
            <person name="Fine L.D."/>
            <person name="Fritchman J.L."/>
            <person name="Fuhrmann J.L."/>
            <person name="Geoghagen N.S.M."/>
            <person name="Gnehm C.L."/>
            <person name="McDonald L.A."/>
            <person name="Small K.V."/>
            <person name="Fraser C.M."/>
            <person name="Smith H.O."/>
            <person name="Venter J.C."/>
        </authorList>
    </citation>
    <scope>NUCLEOTIDE SEQUENCE [LARGE SCALE GENOMIC DNA]</scope>
    <source>
        <strain>ATCC 51907 / DSM 11121 / KW20 / Rd</strain>
    </source>
</reference>
<evidence type="ECO:0000255" key="1"/>
<evidence type="ECO:0000305" key="2"/>